<sequence>MAKKLKKNEEITKKFGDERRKALDDALKNIEKDFGKGAVMRLGERAEQKVQVMSSGSLALDIALGAGGYPKGRIIEIYGPESSGKTTVALHAVAQAQKEGGIAAFIDAEHALDPAYAAALGVNIDELLLAQPDSGEQGLEIAGKLIDSGAVDLVVVDSVAALVPRAEIDGDIGDSHVGLQARMMSQAMRKLSASINKTKTIAIFINQLREKVGVMFGNPETTPGGRALKFYASVRLDVRGTTQIKGTGDQKDSSIGKETKIKVVKNKVAPPFKVAEVEIMYGEGISRTGELVKIASDLDIIQKAGAWFSYNGEKIGQGSENAKRYLADHPQLFDEIDRKVRVKFGLLEESEEESAMAVASEETDDLALDLDNGIEIED</sequence>
<reference key="1">
    <citation type="journal article" date="1995" name="Gene">
        <title>Construction of a Streptococcus pyogenes recA mutant via insertional inactivation, and cloning and sequencing of the complete recA gene.</title>
        <authorList>
            <person name="Tao L."/>
            <person name="Hollingshead S.K."/>
            <person name="Suvorov A.N."/>
            <person name="Ferretti J.J."/>
            <person name="McShan W.M."/>
        </authorList>
    </citation>
    <scope>NUCLEOTIDE SEQUENCE [GENOMIC DNA]</scope>
</reference>
<reference key="2">
    <citation type="journal article" date="2008" name="J. Bacteriol.">
        <title>Genome sequence of a nephritogenic and highly transformable M49 strain of Streptococcus pyogenes.</title>
        <authorList>
            <person name="McShan W.M."/>
            <person name="Ferretti J.J."/>
            <person name="Karasawa T."/>
            <person name="Suvorov A.N."/>
            <person name="Lin S."/>
            <person name="Qin B."/>
            <person name="Jia H."/>
            <person name="Kenton S."/>
            <person name="Najar F."/>
            <person name="Wu H."/>
            <person name="Scott J."/>
            <person name="Roe B.A."/>
            <person name="Savic D.J."/>
        </authorList>
    </citation>
    <scope>NUCLEOTIDE SEQUENCE [LARGE SCALE GENOMIC DNA]</scope>
    <source>
        <strain>NZ131</strain>
    </source>
</reference>
<evidence type="ECO:0000255" key="1">
    <source>
        <dbReference type="HAMAP-Rule" id="MF_00268"/>
    </source>
</evidence>
<evidence type="ECO:0000305" key="2"/>
<name>RECA_STRPZ</name>
<gene>
    <name evidence="1" type="primary">recA</name>
    <name type="ordered locus">Spy49_1753c</name>
</gene>
<accession>P0C096</accession>
<accession>B5XJ04</accession>
<accession>Q59942</accession>
<dbReference type="EMBL" id="U21934">
    <property type="protein sequence ID" value="AAA85501.1"/>
    <property type="status" value="ALT_FRAME"/>
    <property type="molecule type" value="Genomic_DNA"/>
</dbReference>
<dbReference type="EMBL" id="CP000829">
    <property type="protein sequence ID" value="ACI62003.1"/>
    <property type="molecule type" value="Genomic_DNA"/>
</dbReference>
<dbReference type="SMR" id="P0C096"/>
<dbReference type="KEGG" id="soz:Spy49_1753c"/>
<dbReference type="HOGENOM" id="CLU_040469_3_2_9"/>
<dbReference type="Proteomes" id="UP000001039">
    <property type="component" value="Chromosome"/>
</dbReference>
<dbReference type="GO" id="GO:0005829">
    <property type="term" value="C:cytosol"/>
    <property type="evidence" value="ECO:0007669"/>
    <property type="project" value="TreeGrafter"/>
</dbReference>
<dbReference type="GO" id="GO:0005524">
    <property type="term" value="F:ATP binding"/>
    <property type="evidence" value="ECO:0007669"/>
    <property type="project" value="UniProtKB-UniRule"/>
</dbReference>
<dbReference type="GO" id="GO:0016887">
    <property type="term" value="F:ATP hydrolysis activity"/>
    <property type="evidence" value="ECO:0007669"/>
    <property type="project" value="InterPro"/>
</dbReference>
<dbReference type="GO" id="GO:0140664">
    <property type="term" value="F:ATP-dependent DNA damage sensor activity"/>
    <property type="evidence" value="ECO:0007669"/>
    <property type="project" value="InterPro"/>
</dbReference>
<dbReference type="GO" id="GO:0003684">
    <property type="term" value="F:damaged DNA binding"/>
    <property type="evidence" value="ECO:0007669"/>
    <property type="project" value="UniProtKB-UniRule"/>
</dbReference>
<dbReference type="GO" id="GO:0003697">
    <property type="term" value="F:single-stranded DNA binding"/>
    <property type="evidence" value="ECO:0007669"/>
    <property type="project" value="UniProtKB-UniRule"/>
</dbReference>
<dbReference type="GO" id="GO:0006310">
    <property type="term" value="P:DNA recombination"/>
    <property type="evidence" value="ECO:0007669"/>
    <property type="project" value="UniProtKB-UniRule"/>
</dbReference>
<dbReference type="GO" id="GO:0006281">
    <property type="term" value="P:DNA repair"/>
    <property type="evidence" value="ECO:0007669"/>
    <property type="project" value="UniProtKB-UniRule"/>
</dbReference>
<dbReference type="GO" id="GO:0009432">
    <property type="term" value="P:SOS response"/>
    <property type="evidence" value="ECO:0007669"/>
    <property type="project" value="UniProtKB-UniRule"/>
</dbReference>
<dbReference type="CDD" id="cd00983">
    <property type="entry name" value="RecA"/>
    <property type="match status" value="1"/>
</dbReference>
<dbReference type="FunFam" id="3.40.50.300:FF:000087">
    <property type="entry name" value="Recombinase RecA"/>
    <property type="match status" value="1"/>
</dbReference>
<dbReference type="Gene3D" id="3.40.50.300">
    <property type="entry name" value="P-loop containing nucleotide triphosphate hydrolases"/>
    <property type="match status" value="1"/>
</dbReference>
<dbReference type="HAMAP" id="MF_00268">
    <property type="entry name" value="RecA"/>
    <property type="match status" value="1"/>
</dbReference>
<dbReference type="InterPro" id="IPR003593">
    <property type="entry name" value="AAA+_ATPase"/>
</dbReference>
<dbReference type="InterPro" id="IPR013765">
    <property type="entry name" value="DNA_recomb/repair_RecA"/>
</dbReference>
<dbReference type="InterPro" id="IPR020584">
    <property type="entry name" value="DNA_recomb/repair_RecA_CS"/>
</dbReference>
<dbReference type="InterPro" id="IPR027417">
    <property type="entry name" value="P-loop_NTPase"/>
</dbReference>
<dbReference type="InterPro" id="IPR049261">
    <property type="entry name" value="RecA-like_C"/>
</dbReference>
<dbReference type="InterPro" id="IPR049428">
    <property type="entry name" value="RecA-like_N"/>
</dbReference>
<dbReference type="InterPro" id="IPR020588">
    <property type="entry name" value="RecA_ATP-bd"/>
</dbReference>
<dbReference type="InterPro" id="IPR023400">
    <property type="entry name" value="RecA_C_sf"/>
</dbReference>
<dbReference type="InterPro" id="IPR020587">
    <property type="entry name" value="RecA_monomer-monomer_interface"/>
</dbReference>
<dbReference type="NCBIfam" id="TIGR02012">
    <property type="entry name" value="tigrfam_recA"/>
    <property type="match status" value="1"/>
</dbReference>
<dbReference type="PANTHER" id="PTHR45900:SF1">
    <property type="entry name" value="MITOCHONDRIAL DNA REPAIR PROTEIN RECA HOMOLOG-RELATED"/>
    <property type="match status" value="1"/>
</dbReference>
<dbReference type="PANTHER" id="PTHR45900">
    <property type="entry name" value="RECA"/>
    <property type="match status" value="1"/>
</dbReference>
<dbReference type="Pfam" id="PF00154">
    <property type="entry name" value="RecA"/>
    <property type="match status" value="1"/>
</dbReference>
<dbReference type="Pfam" id="PF21096">
    <property type="entry name" value="RecA_C"/>
    <property type="match status" value="1"/>
</dbReference>
<dbReference type="PRINTS" id="PR00142">
    <property type="entry name" value="RECA"/>
</dbReference>
<dbReference type="SMART" id="SM00382">
    <property type="entry name" value="AAA"/>
    <property type="match status" value="1"/>
</dbReference>
<dbReference type="SUPFAM" id="SSF52540">
    <property type="entry name" value="P-loop containing nucleoside triphosphate hydrolases"/>
    <property type="match status" value="1"/>
</dbReference>
<dbReference type="SUPFAM" id="SSF54752">
    <property type="entry name" value="RecA protein, C-terminal domain"/>
    <property type="match status" value="1"/>
</dbReference>
<dbReference type="PROSITE" id="PS00321">
    <property type="entry name" value="RECA_1"/>
    <property type="match status" value="1"/>
</dbReference>
<dbReference type="PROSITE" id="PS50162">
    <property type="entry name" value="RECA_2"/>
    <property type="match status" value="1"/>
</dbReference>
<dbReference type="PROSITE" id="PS50163">
    <property type="entry name" value="RECA_3"/>
    <property type="match status" value="1"/>
</dbReference>
<comment type="function">
    <text>Can catalyze the hydrolysis of ATP in the presence of single-stranded DNA, the ATP-dependent uptake of single-stranded DNA by duplex DNA, and the ATP-dependent hybridization of homologous single-stranded DNAs. It interacts with LexA causing its activation and leading to its autocatalytic cleavage.</text>
</comment>
<comment type="subcellular location">
    <subcellularLocation>
        <location evidence="1">Cytoplasm</location>
    </subcellularLocation>
</comment>
<comment type="similarity">
    <text evidence="1">Belongs to the RecA family.</text>
</comment>
<comment type="sequence caution" evidence="2">
    <conflict type="frameshift">
        <sequence resource="EMBL-CDS" id="AAA85501"/>
    </conflict>
</comment>
<organism>
    <name type="scientific">Streptococcus pyogenes serotype M49 (strain NZ131)</name>
    <dbReference type="NCBI Taxonomy" id="471876"/>
    <lineage>
        <taxon>Bacteria</taxon>
        <taxon>Bacillati</taxon>
        <taxon>Bacillota</taxon>
        <taxon>Bacilli</taxon>
        <taxon>Lactobacillales</taxon>
        <taxon>Streptococcaceae</taxon>
        <taxon>Streptococcus</taxon>
    </lineage>
</organism>
<keyword id="KW-0067">ATP-binding</keyword>
<keyword id="KW-0963">Cytoplasm</keyword>
<keyword id="KW-0227">DNA damage</keyword>
<keyword id="KW-0233">DNA recombination</keyword>
<keyword id="KW-0234">DNA repair</keyword>
<keyword id="KW-0238">DNA-binding</keyword>
<keyword id="KW-0547">Nucleotide-binding</keyword>
<keyword id="KW-0742">SOS response</keyword>
<protein>
    <recommendedName>
        <fullName evidence="1">Protein RecA</fullName>
    </recommendedName>
    <alternativeName>
        <fullName evidence="1">Recombinase A</fullName>
    </alternativeName>
</protein>
<proteinExistence type="inferred from homology"/>
<feature type="chain" id="PRO_0000122865" description="Protein RecA">
    <location>
        <begin position="1"/>
        <end position="378"/>
    </location>
</feature>
<feature type="binding site" evidence="1">
    <location>
        <begin position="79"/>
        <end position="86"/>
    </location>
    <ligand>
        <name>ATP</name>
        <dbReference type="ChEBI" id="CHEBI:30616"/>
    </ligand>
</feature>
<feature type="sequence conflict" description="In Ref. 1; AAA85501." evidence="2" ref="1">
    <original>EQ</original>
    <variation>DE</variation>
    <location>
        <begin position="47"/>
        <end position="48"/>
    </location>
</feature>
<feature type="sequence conflict" description="In Ref. 1; AAA85501." evidence="2" ref="1">
    <original>S</original>
    <variation>R</variation>
    <location>
        <position position="54"/>
    </location>
</feature>
<feature type="sequence conflict" description="In Ref. 1; AAA85501." evidence="2" ref="1">
    <original>LG</original>
    <variation>WI</variation>
    <location>
        <begin position="64"/>
        <end position="65"/>
    </location>
</feature>
<feature type="sequence conflict" description="In Ref. 1; AAA85501." evidence="2" ref="1">
    <original>A</original>
    <variation>S</variation>
    <location>
        <position position="130"/>
    </location>
</feature>
<feature type="sequence conflict" description="In Ref. 1; AAA85501." evidence="2" ref="1">
    <original>TT</original>
    <variation>NN</variation>
    <location>
        <begin position="241"/>
        <end position="242"/>
    </location>
</feature>
<feature type="sequence conflict" description="In Ref. 1; AAA85501." evidence="2" ref="1">
    <original>DS</original>
    <variation>IA</variation>
    <location>
        <begin position="252"/>
        <end position="253"/>
    </location>
</feature>